<organism>
    <name type="scientific">Flavobacterium johnsoniae (strain ATCC 17061 / DSM 2064 / JCM 8514 / BCRC 14874 / CCUG 350202 / NBRC 14942 / NCIMB 11054 / UW101)</name>
    <name type="common">Cytophaga johnsonae</name>
    <dbReference type="NCBI Taxonomy" id="376686"/>
    <lineage>
        <taxon>Bacteria</taxon>
        <taxon>Pseudomonadati</taxon>
        <taxon>Bacteroidota</taxon>
        <taxon>Flavobacteriia</taxon>
        <taxon>Flavobacteriales</taxon>
        <taxon>Flavobacteriaceae</taxon>
        <taxon>Flavobacterium</taxon>
    </lineage>
</organism>
<sequence length="529" mass="61540">MPTDCISYQTSGYFSKLIQDYLDQKSELKTLYNHFPTLENFEKQIAEKASNFDNHNRIALVNTLKKQYQNIEISDSTKQNIELLALENTFTITTGHQLNLFSGPLYFLYKIISTINLTKELKSKYPSYNFVPVYWMATEDHDFEEINYFNFKGKKFRWNKESNGPVGRLSTEGLAEFLDIYSLELGSSTNANTLKKLFEDTYLKHDNLADATRFLANSLFANYGLVIIDADDADLKRAFIPYAKEELEKQTSYKAVQETIEQLKEYTVQVNPREINLFYIEDNLRERIIFEEDKYFVNNTKISFSKDQILSELENHPEKFSPNVIMRPLYQEIILPNLCYIGGGGEIAYWLELKSFFDAVNITFPMILVRNSVLLATEKQAKKADQLNLSWKDLFTKQENLVNAITHKISAFPIDLTPQKEILKTQFQYLYELAAQTDKSFSGAVKAQEVKQTKGLENLEKRLLKAQKRNLSDQLQRVIDLQCELFPNNSLQERQSNFSEFYLEKGEQLVPLLLQKLKPLEMNFNIITI</sequence>
<gene>
    <name evidence="1" type="primary">bshC</name>
    <name type="ordered locus">Fjoh_4974</name>
</gene>
<feature type="chain" id="PRO_0000378236" description="Putative cysteine ligase BshC">
    <location>
        <begin position="1"/>
        <end position="529"/>
    </location>
</feature>
<feature type="coiled-coil region" evidence="1">
    <location>
        <begin position="450"/>
        <end position="485"/>
    </location>
</feature>
<accession>A5F9Z4</accession>
<proteinExistence type="inferred from homology"/>
<reference key="1">
    <citation type="journal article" date="2009" name="Appl. Environ. Microbiol.">
        <title>Novel features of the polysaccharide-digesting gliding bacterium Flavobacterium johnsoniae as revealed by genome sequence analysis.</title>
        <authorList>
            <person name="McBride M.J."/>
            <person name="Xie G."/>
            <person name="Martens E.C."/>
            <person name="Lapidus A."/>
            <person name="Henrissat B."/>
            <person name="Rhodes R.G."/>
            <person name="Goltsman E."/>
            <person name="Wang W."/>
            <person name="Xu J."/>
            <person name="Hunnicutt D.W."/>
            <person name="Staroscik A.M."/>
            <person name="Hoover T.R."/>
            <person name="Cheng Y.Q."/>
            <person name="Stein J.L."/>
        </authorList>
    </citation>
    <scope>NUCLEOTIDE SEQUENCE [LARGE SCALE GENOMIC DNA]</scope>
    <source>
        <strain>ATCC 17061 / DSM 2064 / JCM 8514 / BCRC 14874 / CCUG 350202 / NBRC 14942 / NCIMB 11054 / UW101</strain>
    </source>
</reference>
<comment type="similarity">
    <text evidence="1">Belongs to the BshC family.</text>
</comment>
<protein>
    <recommendedName>
        <fullName evidence="1">Putative cysteine ligase BshC</fullName>
        <ecNumber evidence="1">6.-.-.-</ecNumber>
    </recommendedName>
</protein>
<evidence type="ECO:0000255" key="1">
    <source>
        <dbReference type="HAMAP-Rule" id="MF_01867"/>
    </source>
</evidence>
<keyword id="KW-0175">Coiled coil</keyword>
<keyword id="KW-0436">Ligase</keyword>
<name>BSHC_FLAJ1</name>
<dbReference type="EC" id="6.-.-.-" evidence="1"/>
<dbReference type="EMBL" id="CP000685">
    <property type="protein sequence ID" value="ABQ07973.1"/>
    <property type="molecule type" value="Genomic_DNA"/>
</dbReference>
<dbReference type="RefSeq" id="WP_012026939.1">
    <property type="nucleotide sequence ID" value="NC_009441.1"/>
</dbReference>
<dbReference type="SMR" id="A5F9Z4"/>
<dbReference type="STRING" id="376686.Fjoh_4974"/>
<dbReference type="KEGG" id="fjo:Fjoh_4974"/>
<dbReference type="eggNOG" id="COG4365">
    <property type="taxonomic scope" value="Bacteria"/>
</dbReference>
<dbReference type="HOGENOM" id="CLU_022249_2_0_10"/>
<dbReference type="OrthoDB" id="9765151at2"/>
<dbReference type="Proteomes" id="UP000006694">
    <property type="component" value="Chromosome"/>
</dbReference>
<dbReference type="GO" id="GO:0016874">
    <property type="term" value="F:ligase activity"/>
    <property type="evidence" value="ECO:0007669"/>
    <property type="project" value="UniProtKB-UniRule"/>
</dbReference>
<dbReference type="HAMAP" id="MF_01867">
    <property type="entry name" value="BshC"/>
    <property type="match status" value="1"/>
</dbReference>
<dbReference type="InterPro" id="IPR011199">
    <property type="entry name" value="Bacillithiol_biosynth_BshC"/>
</dbReference>
<dbReference type="InterPro" id="IPR055399">
    <property type="entry name" value="CC_BshC"/>
</dbReference>
<dbReference type="InterPro" id="IPR055398">
    <property type="entry name" value="Rossmann-like_BshC"/>
</dbReference>
<dbReference type="NCBIfam" id="TIGR03998">
    <property type="entry name" value="thiol_BshC"/>
    <property type="match status" value="1"/>
</dbReference>
<dbReference type="Pfam" id="PF24850">
    <property type="entry name" value="CC_BshC"/>
    <property type="match status" value="1"/>
</dbReference>
<dbReference type="Pfam" id="PF10079">
    <property type="entry name" value="Rossmann-like_BshC"/>
    <property type="match status" value="1"/>
</dbReference>
<dbReference type="PIRSF" id="PIRSF012535">
    <property type="entry name" value="UCP012535"/>
    <property type="match status" value="1"/>
</dbReference>